<name>TRUA_CROS8</name>
<gene>
    <name evidence="1" type="primary">truA</name>
    <name type="ordered locus">ESA_00898</name>
</gene>
<feature type="chain" id="PRO_1000017080" description="tRNA pseudouridine synthase A">
    <location>
        <begin position="1"/>
        <end position="270"/>
    </location>
</feature>
<feature type="active site" description="Nucleophile" evidence="1">
    <location>
        <position position="60"/>
    </location>
</feature>
<feature type="binding site" evidence="1">
    <location>
        <position position="118"/>
    </location>
    <ligand>
        <name>substrate</name>
    </ligand>
</feature>
<keyword id="KW-0413">Isomerase</keyword>
<keyword id="KW-1185">Reference proteome</keyword>
<keyword id="KW-0819">tRNA processing</keyword>
<reference key="1">
    <citation type="journal article" date="2010" name="PLoS ONE">
        <title>Genome sequence of Cronobacter sakazakii BAA-894 and comparative genomic hybridization analysis with other Cronobacter species.</title>
        <authorList>
            <person name="Kucerova E."/>
            <person name="Clifton S.W."/>
            <person name="Xia X.Q."/>
            <person name="Long F."/>
            <person name="Porwollik S."/>
            <person name="Fulton L."/>
            <person name="Fronick C."/>
            <person name="Minx P."/>
            <person name="Kyung K."/>
            <person name="Warren W."/>
            <person name="Fulton R."/>
            <person name="Feng D."/>
            <person name="Wollam A."/>
            <person name="Shah N."/>
            <person name="Bhonagiri V."/>
            <person name="Nash W.E."/>
            <person name="Hallsworth-Pepin K."/>
            <person name="Wilson R.K."/>
            <person name="McClelland M."/>
            <person name="Forsythe S.J."/>
        </authorList>
    </citation>
    <scope>NUCLEOTIDE SEQUENCE [LARGE SCALE GENOMIC DNA]</scope>
    <source>
        <strain>ATCC BAA-894</strain>
    </source>
</reference>
<sequence>MSESLEKPVVKIALGIEYDGSKYYGWQRQQEVRSVQEKLEKALSQVANEPINVFCAGRTDAGVHATGQVVHFETTAIRKDAAWTLGVNANLPGDIAVRWVKDVPAEFHARFSATARRYRYVIYNHRLRPAVLSQGVTHYHLPLDAERMHRAAQCLIGENDFTSFRAVQCQSRTPWRNLMHINVERFGAYIVVDIKANAFVHHMVRNIVGSLMEIGCGNQPESWMAELLAAKDRTLAAATAKAEGLYLVSVDYPAQFELPKPPMGPLFLAD</sequence>
<protein>
    <recommendedName>
        <fullName evidence="1">tRNA pseudouridine synthase A</fullName>
        <ecNumber evidence="1">5.4.99.12</ecNumber>
    </recommendedName>
    <alternativeName>
        <fullName evidence="1">tRNA pseudouridine(38-40) synthase</fullName>
    </alternativeName>
    <alternativeName>
        <fullName evidence="1">tRNA pseudouridylate synthase I</fullName>
    </alternativeName>
    <alternativeName>
        <fullName evidence="1">tRNA-uridine isomerase I</fullName>
    </alternativeName>
</protein>
<evidence type="ECO:0000255" key="1">
    <source>
        <dbReference type="HAMAP-Rule" id="MF_00171"/>
    </source>
</evidence>
<proteinExistence type="inferred from homology"/>
<accession>A7MH65</accession>
<organism>
    <name type="scientific">Cronobacter sakazakii (strain ATCC BAA-894)</name>
    <name type="common">Enterobacter sakazakii</name>
    <dbReference type="NCBI Taxonomy" id="290339"/>
    <lineage>
        <taxon>Bacteria</taxon>
        <taxon>Pseudomonadati</taxon>
        <taxon>Pseudomonadota</taxon>
        <taxon>Gammaproteobacteria</taxon>
        <taxon>Enterobacterales</taxon>
        <taxon>Enterobacteriaceae</taxon>
        <taxon>Cronobacter</taxon>
    </lineage>
</organism>
<dbReference type="EC" id="5.4.99.12" evidence="1"/>
<dbReference type="EMBL" id="CP000783">
    <property type="protein sequence ID" value="ABU76168.1"/>
    <property type="molecule type" value="Genomic_DNA"/>
</dbReference>
<dbReference type="RefSeq" id="WP_007776862.1">
    <property type="nucleotide sequence ID" value="NC_009778.1"/>
</dbReference>
<dbReference type="SMR" id="A7MH65"/>
<dbReference type="GeneID" id="45714770"/>
<dbReference type="KEGG" id="esa:ESA_00898"/>
<dbReference type="HOGENOM" id="CLU_014673_0_2_6"/>
<dbReference type="Proteomes" id="UP000000260">
    <property type="component" value="Chromosome"/>
</dbReference>
<dbReference type="GO" id="GO:0003723">
    <property type="term" value="F:RNA binding"/>
    <property type="evidence" value="ECO:0007669"/>
    <property type="project" value="InterPro"/>
</dbReference>
<dbReference type="GO" id="GO:0160147">
    <property type="term" value="F:tRNA pseudouridine(38-40) synthase activity"/>
    <property type="evidence" value="ECO:0007669"/>
    <property type="project" value="UniProtKB-EC"/>
</dbReference>
<dbReference type="GO" id="GO:0031119">
    <property type="term" value="P:tRNA pseudouridine synthesis"/>
    <property type="evidence" value="ECO:0007669"/>
    <property type="project" value="UniProtKB-UniRule"/>
</dbReference>
<dbReference type="CDD" id="cd02570">
    <property type="entry name" value="PseudoU_synth_EcTruA"/>
    <property type="match status" value="1"/>
</dbReference>
<dbReference type="FunFam" id="3.30.70.580:FF:000001">
    <property type="entry name" value="tRNA pseudouridine synthase A"/>
    <property type="match status" value="1"/>
</dbReference>
<dbReference type="FunFam" id="3.30.70.660:FF:000001">
    <property type="entry name" value="tRNA pseudouridine synthase A"/>
    <property type="match status" value="1"/>
</dbReference>
<dbReference type="Gene3D" id="3.30.70.660">
    <property type="entry name" value="Pseudouridine synthase I, catalytic domain, C-terminal subdomain"/>
    <property type="match status" value="1"/>
</dbReference>
<dbReference type="Gene3D" id="3.30.70.580">
    <property type="entry name" value="Pseudouridine synthase I, catalytic domain, N-terminal subdomain"/>
    <property type="match status" value="1"/>
</dbReference>
<dbReference type="HAMAP" id="MF_00171">
    <property type="entry name" value="TruA"/>
    <property type="match status" value="1"/>
</dbReference>
<dbReference type="InterPro" id="IPR020103">
    <property type="entry name" value="PsdUridine_synth_cat_dom_sf"/>
</dbReference>
<dbReference type="InterPro" id="IPR001406">
    <property type="entry name" value="PsdUridine_synth_TruA"/>
</dbReference>
<dbReference type="InterPro" id="IPR020097">
    <property type="entry name" value="PsdUridine_synth_TruA_a/b_dom"/>
</dbReference>
<dbReference type="InterPro" id="IPR020095">
    <property type="entry name" value="PsdUridine_synth_TruA_C"/>
</dbReference>
<dbReference type="InterPro" id="IPR020094">
    <property type="entry name" value="TruA/RsuA/RluB/E/F_N"/>
</dbReference>
<dbReference type="NCBIfam" id="TIGR00071">
    <property type="entry name" value="hisT_truA"/>
    <property type="match status" value="1"/>
</dbReference>
<dbReference type="PANTHER" id="PTHR11142">
    <property type="entry name" value="PSEUDOURIDYLATE SYNTHASE"/>
    <property type="match status" value="1"/>
</dbReference>
<dbReference type="PANTHER" id="PTHR11142:SF0">
    <property type="entry name" value="TRNA PSEUDOURIDINE SYNTHASE-LIKE 1"/>
    <property type="match status" value="1"/>
</dbReference>
<dbReference type="Pfam" id="PF01416">
    <property type="entry name" value="PseudoU_synth_1"/>
    <property type="match status" value="2"/>
</dbReference>
<dbReference type="PIRSF" id="PIRSF001430">
    <property type="entry name" value="tRNA_psdUrid_synth"/>
    <property type="match status" value="1"/>
</dbReference>
<dbReference type="SUPFAM" id="SSF55120">
    <property type="entry name" value="Pseudouridine synthase"/>
    <property type="match status" value="1"/>
</dbReference>
<comment type="function">
    <text evidence="1">Formation of pseudouridine at positions 38, 39 and 40 in the anticodon stem and loop of transfer RNAs.</text>
</comment>
<comment type="catalytic activity">
    <reaction evidence="1">
        <text>uridine(38/39/40) in tRNA = pseudouridine(38/39/40) in tRNA</text>
        <dbReference type="Rhea" id="RHEA:22376"/>
        <dbReference type="Rhea" id="RHEA-COMP:10085"/>
        <dbReference type="Rhea" id="RHEA-COMP:10087"/>
        <dbReference type="ChEBI" id="CHEBI:65314"/>
        <dbReference type="ChEBI" id="CHEBI:65315"/>
        <dbReference type="EC" id="5.4.99.12"/>
    </reaction>
</comment>
<comment type="subunit">
    <text evidence="1">Homodimer.</text>
</comment>
<comment type="similarity">
    <text evidence="1">Belongs to the tRNA pseudouridine synthase TruA family.</text>
</comment>